<feature type="chain" id="PRO_0000067707" description="DNA-directed RNA polymerase subunit beta'">
    <location>
        <begin position="1"/>
        <end position="1199"/>
    </location>
</feature>
<feature type="binding site" evidence="1">
    <location>
        <position position="60"/>
    </location>
    <ligand>
        <name>Zn(2+)</name>
        <dbReference type="ChEBI" id="CHEBI:29105"/>
        <label>1</label>
    </ligand>
</feature>
<feature type="binding site" evidence="1">
    <location>
        <position position="62"/>
    </location>
    <ligand>
        <name>Zn(2+)</name>
        <dbReference type="ChEBI" id="CHEBI:29105"/>
        <label>1</label>
    </ligand>
</feature>
<feature type="binding site" evidence="1">
    <location>
        <position position="75"/>
    </location>
    <ligand>
        <name>Zn(2+)</name>
        <dbReference type="ChEBI" id="CHEBI:29105"/>
        <label>1</label>
    </ligand>
</feature>
<feature type="binding site" evidence="1">
    <location>
        <position position="78"/>
    </location>
    <ligand>
        <name>Zn(2+)</name>
        <dbReference type="ChEBI" id="CHEBI:29105"/>
        <label>1</label>
    </ligand>
</feature>
<feature type="binding site" evidence="1">
    <location>
        <position position="449"/>
    </location>
    <ligand>
        <name>Mg(2+)</name>
        <dbReference type="ChEBI" id="CHEBI:18420"/>
    </ligand>
</feature>
<feature type="binding site" evidence="1">
    <location>
        <position position="451"/>
    </location>
    <ligand>
        <name>Mg(2+)</name>
        <dbReference type="ChEBI" id="CHEBI:18420"/>
    </ligand>
</feature>
<feature type="binding site" evidence="1">
    <location>
        <position position="453"/>
    </location>
    <ligand>
        <name>Mg(2+)</name>
        <dbReference type="ChEBI" id="CHEBI:18420"/>
    </ligand>
</feature>
<feature type="binding site" evidence="1">
    <location>
        <position position="818"/>
    </location>
    <ligand>
        <name>Zn(2+)</name>
        <dbReference type="ChEBI" id="CHEBI:29105"/>
        <label>2</label>
    </ligand>
</feature>
<feature type="binding site" evidence="1">
    <location>
        <position position="892"/>
    </location>
    <ligand>
        <name>Zn(2+)</name>
        <dbReference type="ChEBI" id="CHEBI:29105"/>
        <label>2</label>
    </ligand>
</feature>
<feature type="binding site" evidence="1">
    <location>
        <position position="899"/>
    </location>
    <ligand>
        <name>Zn(2+)</name>
        <dbReference type="ChEBI" id="CHEBI:29105"/>
        <label>2</label>
    </ligand>
</feature>
<feature type="binding site" evidence="1">
    <location>
        <position position="902"/>
    </location>
    <ligand>
        <name>Zn(2+)</name>
        <dbReference type="ChEBI" id="CHEBI:29105"/>
        <label>2</label>
    </ligand>
</feature>
<feature type="sequence variant" description="In streptolydigan resistant alleles stl6/stl445.">
    <original>D</original>
    <variation>G</variation>
    <location>
        <position position="796"/>
    </location>
</feature>
<feature type="sequence conflict" description="In Ref. 5; BAA10999." evidence="5" ref="5">
    <original>H</original>
    <variation>P</variation>
    <location>
        <position position="781"/>
    </location>
</feature>
<feature type="sequence conflict" description="In Ref. 5; BAA10999." evidence="5" ref="5">
    <original>E</original>
    <variation>G</variation>
    <location>
        <position position="1026"/>
    </location>
</feature>
<feature type="sequence conflict" description="In Ref. 5; BAA10999." evidence="5" ref="5">
    <original>A</original>
    <variation>G</variation>
    <location>
        <position position="1173"/>
    </location>
</feature>
<feature type="sequence conflict" description="In Ref. 5; BAA10999." evidence="5" ref="5">
    <original>G</original>
    <variation>A</variation>
    <location>
        <position position="1176"/>
    </location>
</feature>
<feature type="strand" evidence="9">
    <location>
        <begin position="9"/>
        <end position="11"/>
    </location>
</feature>
<feature type="helix" evidence="9">
    <location>
        <begin position="17"/>
        <end position="23"/>
    </location>
</feature>
<feature type="strand" evidence="9">
    <location>
        <begin position="25"/>
        <end position="27"/>
    </location>
</feature>
<feature type="turn" evidence="9">
    <location>
        <begin position="36"/>
        <end position="39"/>
    </location>
</feature>
<feature type="strand" evidence="8">
    <location>
        <begin position="43"/>
        <end position="47"/>
    </location>
</feature>
<feature type="turn" evidence="8">
    <location>
        <begin position="49"/>
        <end position="51"/>
    </location>
</feature>
<feature type="strand" evidence="8">
    <location>
        <begin position="55"/>
        <end position="58"/>
    </location>
</feature>
<feature type="strand" evidence="8">
    <location>
        <begin position="62"/>
        <end position="64"/>
    </location>
</feature>
<feature type="strand" evidence="9">
    <location>
        <begin position="73"/>
        <end position="77"/>
    </location>
</feature>
<feature type="turn" evidence="9">
    <location>
        <begin position="78"/>
        <end position="80"/>
    </location>
</feature>
<feature type="turn" evidence="9">
    <location>
        <begin position="88"/>
        <end position="90"/>
    </location>
</feature>
<feature type="strand" evidence="9">
    <location>
        <begin position="93"/>
        <end position="102"/>
    </location>
</feature>
<feature type="helix" evidence="9">
    <location>
        <begin position="104"/>
        <end position="106"/>
    </location>
</feature>
<feature type="strand" evidence="9">
    <location>
        <begin position="108"/>
        <end position="111"/>
    </location>
</feature>
<feature type="helix" evidence="9">
    <location>
        <begin position="114"/>
        <end position="117"/>
    </location>
</feature>
<feature type="helix" evidence="9">
    <location>
        <begin position="122"/>
        <end position="125"/>
    </location>
</feature>
<feature type="turn" evidence="9">
    <location>
        <begin position="126"/>
        <end position="128"/>
    </location>
</feature>
<feature type="strand" evidence="9">
    <location>
        <begin position="129"/>
        <end position="132"/>
    </location>
</feature>
<feature type="strand" evidence="7">
    <location>
        <begin position="135"/>
        <end position="138"/>
    </location>
</feature>
<feature type="strand" evidence="8">
    <location>
        <begin position="140"/>
        <end position="142"/>
    </location>
</feature>
<feature type="strand" evidence="9">
    <location>
        <begin position="143"/>
        <end position="147"/>
    </location>
</feature>
<feature type="helix" evidence="9">
    <location>
        <begin position="153"/>
        <end position="158"/>
    </location>
</feature>
<feature type="turn" evidence="9">
    <location>
        <begin position="159"/>
        <end position="163"/>
    </location>
</feature>
<feature type="strand" evidence="10">
    <location>
        <begin position="166"/>
        <end position="169"/>
    </location>
</feature>
<feature type="helix" evidence="9">
    <location>
        <begin position="171"/>
        <end position="181"/>
    </location>
</feature>
<feature type="helix" evidence="9">
    <location>
        <begin position="184"/>
        <end position="194"/>
    </location>
</feature>
<feature type="turn" evidence="7">
    <location>
        <begin position="195"/>
        <end position="197"/>
    </location>
</feature>
<feature type="helix" evidence="9">
    <location>
        <begin position="201"/>
        <end position="218"/>
    </location>
</feature>
<feature type="helix" evidence="9">
    <location>
        <begin position="223"/>
        <end position="226"/>
    </location>
</feature>
<feature type="strand" evidence="9">
    <location>
        <begin position="227"/>
        <end position="233"/>
    </location>
</feature>
<feature type="helix" evidence="9">
    <location>
        <begin position="236"/>
        <end position="238"/>
    </location>
</feature>
<feature type="strand" evidence="6">
    <location>
        <begin position="241"/>
        <end position="243"/>
    </location>
</feature>
<feature type="strand" evidence="9">
    <location>
        <begin position="246"/>
        <end position="248"/>
    </location>
</feature>
<feature type="strand" evidence="6">
    <location>
        <begin position="249"/>
        <end position="251"/>
    </location>
</feature>
<feature type="helix" evidence="9">
    <location>
        <begin position="253"/>
        <end position="272"/>
    </location>
</feature>
<feature type="helix" evidence="9">
    <location>
        <begin position="278"/>
        <end position="297"/>
    </location>
</feature>
<feature type="strand" evidence="8">
    <location>
        <begin position="299"/>
        <end position="301"/>
    </location>
</feature>
<feature type="turn" evidence="9">
    <location>
        <begin position="308"/>
        <end position="310"/>
    </location>
</feature>
<feature type="helix" evidence="8">
    <location>
        <begin position="316"/>
        <end position="319"/>
    </location>
</feature>
<feature type="turn" evidence="10">
    <location>
        <begin position="322"/>
        <end position="324"/>
    </location>
</feature>
<feature type="helix" evidence="9">
    <location>
        <begin position="326"/>
        <end position="329"/>
    </location>
</feature>
<feature type="strand" evidence="9">
    <location>
        <begin position="331"/>
        <end position="346"/>
    </location>
</feature>
<feature type="strand" evidence="10">
    <location>
        <begin position="348"/>
        <end position="350"/>
    </location>
</feature>
<feature type="strand" evidence="9">
    <location>
        <begin position="354"/>
        <end position="358"/>
    </location>
</feature>
<feature type="helix" evidence="9">
    <location>
        <begin position="359"/>
        <end position="365"/>
    </location>
</feature>
<feature type="helix" evidence="9">
    <location>
        <begin position="367"/>
        <end position="376"/>
    </location>
</feature>
<feature type="strand" evidence="9">
    <location>
        <begin position="379"/>
        <end position="382"/>
    </location>
</feature>
<feature type="helix" evidence="9">
    <location>
        <begin position="383"/>
        <end position="392"/>
    </location>
</feature>
<feature type="helix" evidence="9">
    <location>
        <begin position="395"/>
        <end position="404"/>
    </location>
</feature>
<feature type="turn" evidence="8">
    <location>
        <begin position="405"/>
        <end position="407"/>
    </location>
</feature>
<feature type="strand" evidence="9">
    <location>
        <begin position="410"/>
        <end position="416"/>
    </location>
</feature>
<feature type="helix" evidence="9">
    <location>
        <begin position="420"/>
        <end position="422"/>
    </location>
</feature>
<feature type="strand" evidence="9">
    <location>
        <begin position="423"/>
        <end position="438"/>
    </location>
</feature>
<feature type="helix" evidence="9">
    <location>
        <begin position="440"/>
        <end position="442"/>
    </location>
</feature>
<feature type="helix" evidence="9">
    <location>
        <begin position="443"/>
        <end position="446"/>
    </location>
</feature>
<feature type="turn" evidence="9">
    <location>
        <begin position="450"/>
        <end position="452"/>
    </location>
</feature>
<feature type="strand" evidence="9">
    <location>
        <begin position="454"/>
        <end position="458"/>
    </location>
</feature>
<feature type="helix" evidence="9">
    <location>
        <begin position="463"/>
        <end position="471"/>
    </location>
</feature>
<feature type="strand" evidence="9">
    <location>
        <begin position="473"/>
        <end position="475"/>
    </location>
</feature>
<feature type="turn" evidence="9">
    <location>
        <begin position="482"/>
        <end position="484"/>
    </location>
</feature>
<feature type="strand" evidence="9">
    <location>
        <begin position="485"/>
        <end position="488"/>
    </location>
</feature>
<feature type="helix" evidence="9">
    <location>
        <begin position="494"/>
        <end position="502"/>
    </location>
</feature>
<feature type="turn" evidence="9">
    <location>
        <begin position="510"/>
        <end position="513"/>
    </location>
</feature>
<feature type="strand" evidence="9">
    <location>
        <begin position="515"/>
        <end position="518"/>
    </location>
</feature>
<feature type="helix" evidence="9">
    <location>
        <begin position="519"/>
        <end position="528"/>
    </location>
</feature>
<feature type="strand" evidence="8">
    <location>
        <begin position="529"/>
        <end position="531"/>
    </location>
</feature>
<feature type="strand" evidence="9">
    <location>
        <begin position="536"/>
        <end position="540"/>
    </location>
</feature>
<feature type="helix" evidence="9">
    <location>
        <begin position="541"/>
        <end position="543"/>
    </location>
</feature>
<feature type="helix" evidence="9">
    <location>
        <begin position="551"/>
        <end position="554"/>
    </location>
</feature>
<feature type="strand" evidence="9">
    <location>
        <begin position="556"/>
        <end position="561"/>
    </location>
</feature>
<feature type="helix" evidence="9">
    <location>
        <begin position="564"/>
        <end position="568"/>
    </location>
</feature>
<feature type="strand" evidence="9">
    <location>
        <begin position="580"/>
        <end position="582"/>
    </location>
</feature>
<feature type="helix" evidence="9">
    <location>
        <begin position="583"/>
        <end position="587"/>
    </location>
</feature>
<feature type="helix" evidence="9">
    <location>
        <begin position="592"/>
        <end position="594"/>
    </location>
</feature>
<feature type="helix" evidence="9">
    <location>
        <begin position="602"/>
        <end position="608"/>
    </location>
</feature>
<feature type="helix" evidence="9">
    <location>
        <begin position="617"/>
        <end position="630"/>
    </location>
</feature>
<feature type="helix" evidence="9">
    <location>
        <begin position="634"/>
        <end position="652"/>
    </location>
</feature>
<feature type="turn" evidence="9">
    <location>
        <begin position="653"/>
        <end position="655"/>
    </location>
</feature>
<feature type="helix" evidence="9">
    <location>
        <begin position="660"/>
        <end position="663"/>
    </location>
</feature>
<feature type="helix" evidence="9">
    <location>
        <begin position="669"/>
        <end position="688"/>
    </location>
</feature>
<feature type="helix" evidence="9">
    <location>
        <begin position="694"/>
        <end position="719"/>
    </location>
</feature>
<feature type="helix" evidence="9">
    <location>
        <begin position="725"/>
        <end position="731"/>
    </location>
</feature>
<feature type="strand" evidence="10">
    <location>
        <begin position="732"/>
        <end position="735"/>
    </location>
</feature>
<feature type="helix" evidence="9">
    <location>
        <begin position="738"/>
        <end position="745"/>
    </location>
</feature>
<feature type="strand" evidence="9">
    <location>
        <begin position="754"/>
        <end position="758"/>
    </location>
</feature>
<feature type="turn" evidence="9">
    <location>
        <begin position="767"/>
        <end position="769"/>
    </location>
</feature>
<feature type="helix" evidence="9">
    <location>
        <begin position="773"/>
        <end position="808"/>
    </location>
</feature>
<feature type="strand" evidence="9">
    <location>
        <begin position="813"/>
        <end position="816"/>
    </location>
</feature>
<feature type="strand" evidence="8">
    <location>
        <begin position="824"/>
        <end position="826"/>
    </location>
</feature>
<feature type="strand" evidence="9">
    <location>
        <begin position="829"/>
        <end position="831"/>
    </location>
</feature>
<feature type="strand" evidence="9">
    <location>
        <begin position="834"/>
        <end position="837"/>
    </location>
</feature>
<feature type="helix" evidence="9">
    <location>
        <begin position="840"/>
        <end position="842"/>
    </location>
</feature>
<feature type="turn" evidence="9">
    <location>
        <begin position="843"/>
        <end position="845"/>
    </location>
</feature>
<feature type="strand" evidence="9">
    <location>
        <begin position="846"/>
        <end position="850"/>
    </location>
</feature>
<feature type="strand" evidence="6">
    <location>
        <begin position="852"/>
        <end position="854"/>
    </location>
</feature>
<feature type="turn" evidence="9">
    <location>
        <begin position="855"/>
        <end position="857"/>
    </location>
</feature>
<feature type="strand" evidence="9">
    <location>
        <begin position="860"/>
        <end position="862"/>
    </location>
</feature>
<feature type="strand" evidence="6">
    <location>
        <begin position="864"/>
        <end position="867"/>
    </location>
</feature>
<feature type="helix" evidence="9">
    <location>
        <begin position="870"/>
        <end position="878"/>
    </location>
</feature>
<feature type="strand" evidence="9">
    <location>
        <begin position="884"/>
        <end position="887"/>
    </location>
</feature>
<feature type="helix" evidence="9">
    <location>
        <begin position="889"/>
        <end position="891"/>
    </location>
</feature>
<feature type="strand" evidence="9">
    <location>
        <begin position="897"/>
        <end position="899"/>
    </location>
</feature>
<feature type="helix" evidence="9">
    <location>
        <begin position="900"/>
        <end position="903"/>
    </location>
</feature>
<feature type="turn" evidence="9">
    <location>
        <begin position="907"/>
        <end position="909"/>
    </location>
</feature>
<feature type="strand" evidence="9">
    <location>
        <begin position="910"/>
        <end position="912"/>
    </location>
</feature>
<feature type="helix" evidence="9">
    <location>
        <begin position="919"/>
        <end position="928"/>
    </location>
</feature>
<feature type="helix" evidence="9">
    <location>
        <begin position="929"/>
        <end position="931"/>
    </location>
</feature>
<feature type="helix" evidence="10">
    <location>
        <begin position="941"/>
        <end position="944"/>
    </location>
</feature>
<feature type="helix" evidence="9">
    <location>
        <begin position="953"/>
        <end position="961"/>
    </location>
</feature>
<feature type="strand" evidence="7">
    <location>
        <begin position="966"/>
        <end position="968"/>
    </location>
</feature>
<feature type="strand" evidence="8">
    <location>
        <begin position="973"/>
        <end position="975"/>
    </location>
</feature>
<feature type="strand" evidence="9">
    <location>
        <begin position="976"/>
        <end position="981"/>
    </location>
</feature>
<feature type="helix" evidence="9">
    <location>
        <begin position="984"/>
        <end position="986"/>
    </location>
</feature>
<feature type="strand" evidence="9">
    <location>
        <begin position="988"/>
        <end position="994"/>
    </location>
</feature>
<feature type="strand" evidence="9">
    <location>
        <begin position="999"/>
        <end position="1005"/>
    </location>
</feature>
<feature type="strand" evidence="8">
    <location>
        <begin position="1014"/>
        <end position="1016"/>
    </location>
</feature>
<feature type="strand" evidence="9">
    <location>
        <begin position="1025"/>
        <end position="1028"/>
    </location>
</feature>
<feature type="helix" evidence="9">
    <location>
        <begin position="1031"/>
        <end position="1037"/>
    </location>
</feature>
<feature type="helix" evidence="9">
    <location>
        <begin position="1040"/>
        <end position="1057"/>
    </location>
</feature>
<feature type="helix" evidence="9">
    <location>
        <begin position="1064"/>
        <end position="1074"/>
    </location>
</feature>
<feature type="strand" evidence="9">
    <location>
        <begin position="1077"/>
        <end position="1079"/>
    </location>
</feature>
<feature type="strand" evidence="10">
    <location>
        <begin position="1085"/>
        <end position="1087"/>
    </location>
</feature>
<feature type="strand" evidence="9">
    <location>
        <begin position="1093"/>
        <end position="1095"/>
    </location>
</feature>
<feature type="helix" evidence="9">
    <location>
        <begin position="1096"/>
        <end position="1107"/>
    </location>
</feature>
<feature type="strand" evidence="6">
    <location>
        <begin position="1109"/>
        <end position="1111"/>
    </location>
</feature>
<feature type="strand" evidence="10">
    <location>
        <begin position="1116"/>
        <end position="1119"/>
    </location>
</feature>
<feature type="helix" evidence="9">
    <location>
        <begin position="1123"/>
        <end position="1127"/>
    </location>
</feature>
<feature type="strand" evidence="8">
    <location>
        <begin position="1128"/>
        <end position="1131"/>
    </location>
</feature>
<feature type="helix" evidence="9">
    <location>
        <begin position="1133"/>
        <end position="1137"/>
    </location>
</feature>
<feature type="helix" evidence="9">
    <location>
        <begin position="1142"/>
        <end position="1152"/>
    </location>
</feature>
<feature type="strand" evidence="9">
    <location>
        <begin position="1156"/>
        <end position="1158"/>
    </location>
</feature>
<feature type="helix" evidence="9">
    <location>
        <begin position="1162"/>
        <end position="1167"/>
    </location>
</feature>
<feature type="helix" evidence="9">
    <location>
        <begin position="1174"/>
        <end position="1176"/>
    </location>
</feature>
<feature type="helix" evidence="9">
    <location>
        <begin position="1178"/>
        <end position="1181"/>
    </location>
</feature>
<keyword id="KW-0002">3D-structure</keyword>
<keyword id="KW-0046">Antibiotic resistance</keyword>
<keyword id="KW-0240">DNA-directed RNA polymerase</keyword>
<keyword id="KW-0460">Magnesium</keyword>
<keyword id="KW-0479">Metal-binding</keyword>
<keyword id="KW-0548">Nucleotidyltransferase</keyword>
<keyword id="KW-1185">Reference proteome</keyword>
<keyword id="KW-0804">Transcription</keyword>
<keyword id="KW-0808">Transferase</keyword>
<keyword id="KW-0862">Zinc</keyword>
<dbReference type="EC" id="2.7.7.6" evidence="1 2"/>
<dbReference type="EMBL" id="L43593">
    <property type="protein sequence ID" value="AAB59112.1"/>
    <property type="status" value="ALT_FRAME"/>
    <property type="molecule type" value="Genomic_DNA"/>
</dbReference>
<dbReference type="EMBL" id="AL009126">
    <property type="protein sequence ID" value="CAB11884.2"/>
    <property type="molecule type" value="Genomic_DNA"/>
</dbReference>
<dbReference type="EMBL" id="L24376">
    <property type="protein sequence ID" value="AAB00973.1"/>
    <property type="molecule type" value="Genomic_DNA"/>
</dbReference>
<dbReference type="EMBL" id="D64127">
    <property type="protein sequence ID" value="BAA10999.1"/>
    <property type="molecule type" value="Genomic_DNA"/>
</dbReference>
<dbReference type="PIR" id="G69698">
    <property type="entry name" value="G69698"/>
</dbReference>
<dbReference type="RefSeq" id="NP_387989.2">
    <property type="nucleotide sequence ID" value="NC_000964.3"/>
</dbReference>
<dbReference type="RefSeq" id="WP_004399688.1">
    <property type="nucleotide sequence ID" value="NZ_OZ025638.1"/>
</dbReference>
<dbReference type="PDB" id="6WVJ">
    <property type="method" value="EM"/>
    <property type="resolution" value="3.36 A"/>
    <property type="chains" value="D=1-1199"/>
</dbReference>
<dbReference type="PDB" id="6WVK">
    <property type="method" value="EM"/>
    <property type="resolution" value="3.36 A"/>
    <property type="chains" value="D=1-1199"/>
</dbReference>
<dbReference type="PDB" id="6ZCA">
    <property type="method" value="EM"/>
    <property type="resolution" value="4.20 A"/>
    <property type="chains" value="Y=1-1199"/>
</dbReference>
<dbReference type="PDB" id="6ZFB">
    <property type="method" value="EM"/>
    <property type="resolution" value="3.90 A"/>
    <property type="chains" value="Y/y=1-1199"/>
</dbReference>
<dbReference type="PDB" id="7CKQ">
    <property type="method" value="EM"/>
    <property type="resolution" value="4.40 A"/>
    <property type="chains" value="D=1-1199"/>
</dbReference>
<dbReference type="PDB" id="7F75">
    <property type="method" value="EM"/>
    <property type="resolution" value="4.20 A"/>
    <property type="chains" value="D=1-1199"/>
</dbReference>
<dbReference type="PDB" id="8XA6">
    <property type="method" value="EM"/>
    <property type="resolution" value="3.02 A"/>
    <property type="chains" value="D=1-1199"/>
</dbReference>
<dbReference type="PDB" id="8XA7">
    <property type="method" value="EM"/>
    <property type="resolution" value="2.94 A"/>
    <property type="chains" value="D=1-1199"/>
</dbReference>
<dbReference type="PDB" id="8XA8">
    <property type="method" value="EM"/>
    <property type="resolution" value="3.19 A"/>
    <property type="chains" value="D=1-1199"/>
</dbReference>
<dbReference type="PDBsum" id="6WVJ"/>
<dbReference type="PDBsum" id="6WVK"/>
<dbReference type="PDBsum" id="6ZCA"/>
<dbReference type="PDBsum" id="6ZFB"/>
<dbReference type="PDBsum" id="7CKQ"/>
<dbReference type="PDBsum" id="7F75"/>
<dbReference type="PDBsum" id="8XA6"/>
<dbReference type="PDBsum" id="8XA7"/>
<dbReference type="PDBsum" id="8XA8"/>
<dbReference type="EMDB" id="EMD-21921"/>
<dbReference type="EMDB" id="EMD-30390"/>
<dbReference type="EMDB" id="EMD-31485"/>
<dbReference type="EMDB" id="EMD-38195"/>
<dbReference type="EMDB" id="EMD-38196"/>
<dbReference type="EMDB" id="EMD-38197"/>
<dbReference type="SMR" id="P37871"/>
<dbReference type="DIP" id="DIP-49022N"/>
<dbReference type="FunCoup" id="P37871">
    <property type="interactions" value="595"/>
</dbReference>
<dbReference type="IntAct" id="P37871">
    <property type="interactions" value="7"/>
</dbReference>
<dbReference type="MINT" id="P37871"/>
<dbReference type="STRING" id="224308.BSU01080"/>
<dbReference type="jPOST" id="P37871"/>
<dbReference type="PaxDb" id="224308-BSU01080"/>
<dbReference type="EnsemblBacteria" id="CAB11884">
    <property type="protein sequence ID" value="CAB11884"/>
    <property type="gene ID" value="BSU_01080"/>
</dbReference>
<dbReference type="GeneID" id="86875494"/>
<dbReference type="GeneID" id="935977"/>
<dbReference type="KEGG" id="bsu:BSU01080"/>
<dbReference type="PATRIC" id="fig|224308.179.peg.111"/>
<dbReference type="eggNOG" id="COG0086">
    <property type="taxonomic scope" value="Bacteria"/>
</dbReference>
<dbReference type="InParanoid" id="P37871"/>
<dbReference type="OrthoDB" id="9815296at2"/>
<dbReference type="PhylomeDB" id="P37871"/>
<dbReference type="BioCyc" id="BSUB:BSU01080-MONOMER"/>
<dbReference type="Proteomes" id="UP000001570">
    <property type="component" value="Chromosome"/>
</dbReference>
<dbReference type="GO" id="GO:0000428">
    <property type="term" value="C:DNA-directed RNA polymerase complex"/>
    <property type="evidence" value="ECO:0007669"/>
    <property type="project" value="UniProtKB-KW"/>
</dbReference>
<dbReference type="GO" id="GO:0003677">
    <property type="term" value="F:DNA binding"/>
    <property type="evidence" value="ECO:0007669"/>
    <property type="project" value="UniProtKB-UniRule"/>
</dbReference>
<dbReference type="GO" id="GO:0003899">
    <property type="term" value="F:DNA-directed RNA polymerase activity"/>
    <property type="evidence" value="ECO:0007669"/>
    <property type="project" value="UniProtKB-UniRule"/>
</dbReference>
<dbReference type="GO" id="GO:0000287">
    <property type="term" value="F:magnesium ion binding"/>
    <property type="evidence" value="ECO:0007669"/>
    <property type="project" value="UniProtKB-UniRule"/>
</dbReference>
<dbReference type="GO" id="GO:0008270">
    <property type="term" value="F:zinc ion binding"/>
    <property type="evidence" value="ECO:0007669"/>
    <property type="project" value="UniProtKB-UniRule"/>
</dbReference>
<dbReference type="GO" id="GO:0006351">
    <property type="term" value="P:DNA-templated transcription"/>
    <property type="evidence" value="ECO:0007669"/>
    <property type="project" value="UniProtKB-UniRule"/>
</dbReference>
<dbReference type="GO" id="GO:0046677">
    <property type="term" value="P:response to antibiotic"/>
    <property type="evidence" value="ECO:0007669"/>
    <property type="project" value="UniProtKB-KW"/>
</dbReference>
<dbReference type="CDD" id="cd02655">
    <property type="entry name" value="RNAP_beta'_C"/>
    <property type="match status" value="1"/>
</dbReference>
<dbReference type="CDD" id="cd01609">
    <property type="entry name" value="RNAP_beta'_N"/>
    <property type="match status" value="1"/>
</dbReference>
<dbReference type="FunFam" id="1.10.132.30:FF:000003">
    <property type="entry name" value="DNA-directed RNA polymerase subunit beta"/>
    <property type="match status" value="1"/>
</dbReference>
<dbReference type="FunFam" id="1.10.150.390:FF:000002">
    <property type="entry name" value="DNA-directed RNA polymerase subunit beta"/>
    <property type="match status" value="1"/>
</dbReference>
<dbReference type="FunFam" id="1.10.40.90:FF:000001">
    <property type="entry name" value="DNA-directed RNA polymerase subunit beta"/>
    <property type="match status" value="1"/>
</dbReference>
<dbReference type="FunFam" id="4.10.860.120:FF:000001">
    <property type="entry name" value="DNA-directed RNA polymerase subunit beta"/>
    <property type="match status" value="1"/>
</dbReference>
<dbReference type="Gene3D" id="1.10.132.30">
    <property type="match status" value="1"/>
</dbReference>
<dbReference type="Gene3D" id="1.10.150.390">
    <property type="match status" value="1"/>
</dbReference>
<dbReference type="Gene3D" id="1.10.1790.20">
    <property type="match status" value="1"/>
</dbReference>
<dbReference type="Gene3D" id="1.10.40.90">
    <property type="match status" value="1"/>
</dbReference>
<dbReference type="Gene3D" id="2.40.40.20">
    <property type="match status" value="1"/>
</dbReference>
<dbReference type="Gene3D" id="2.40.50.100">
    <property type="match status" value="1"/>
</dbReference>
<dbReference type="Gene3D" id="4.10.860.120">
    <property type="entry name" value="RNA polymerase II, clamp domain"/>
    <property type="match status" value="1"/>
</dbReference>
<dbReference type="Gene3D" id="1.10.274.100">
    <property type="entry name" value="RNA polymerase Rpb1, domain 3"/>
    <property type="match status" value="1"/>
</dbReference>
<dbReference type="HAMAP" id="MF_01322">
    <property type="entry name" value="RNApol_bact_RpoC"/>
    <property type="match status" value="1"/>
</dbReference>
<dbReference type="InterPro" id="IPR045867">
    <property type="entry name" value="DNA-dir_RpoC_beta_prime"/>
</dbReference>
<dbReference type="InterPro" id="IPR012754">
    <property type="entry name" value="DNA-dir_RpoC_beta_prime_bact"/>
</dbReference>
<dbReference type="InterPro" id="IPR000722">
    <property type="entry name" value="RNA_pol_asu"/>
</dbReference>
<dbReference type="InterPro" id="IPR006592">
    <property type="entry name" value="RNA_pol_N"/>
</dbReference>
<dbReference type="InterPro" id="IPR007080">
    <property type="entry name" value="RNA_pol_Rpb1_1"/>
</dbReference>
<dbReference type="InterPro" id="IPR007066">
    <property type="entry name" value="RNA_pol_Rpb1_3"/>
</dbReference>
<dbReference type="InterPro" id="IPR042102">
    <property type="entry name" value="RNA_pol_Rpb1_3_sf"/>
</dbReference>
<dbReference type="InterPro" id="IPR007083">
    <property type="entry name" value="RNA_pol_Rpb1_4"/>
</dbReference>
<dbReference type="InterPro" id="IPR007081">
    <property type="entry name" value="RNA_pol_Rpb1_5"/>
</dbReference>
<dbReference type="InterPro" id="IPR044893">
    <property type="entry name" value="RNA_pol_Rpb1_clamp_domain"/>
</dbReference>
<dbReference type="InterPro" id="IPR038120">
    <property type="entry name" value="Rpb1_funnel_sf"/>
</dbReference>
<dbReference type="NCBIfam" id="TIGR02386">
    <property type="entry name" value="rpoC_TIGR"/>
    <property type="match status" value="1"/>
</dbReference>
<dbReference type="PANTHER" id="PTHR19376">
    <property type="entry name" value="DNA-DIRECTED RNA POLYMERASE"/>
    <property type="match status" value="1"/>
</dbReference>
<dbReference type="PANTHER" id="PTHR19376:SF54">
    <property type="entry name" value="DNA-DIRECTED RNA POLYMERASE SUBUNIT BETA"/>
    <property type="match status" value="1"/>
</dbReference>
<dbReference type="Pfam" id="PF04997">
    <property type="entry name" value="RNA_pol_Rpb1_1"/>
    <property type="match status" value="1"/>
</dbReference>
<dbReference type="Pfam" id="PF00623">
    <property type="entry name" value="RNA_pol_Rpb1_2"/>
    <property type="match status" value="2"/>
</dbReference>
<dbReference type="Pfam" id="PF04983">
    <property type="entry name" value="RNA_pol_Rpb1_3"/>
    <property type="match status" value="1"/>
</dbReference>
<dbReference type="Pfam" id="PF05000">
    <property type="entry name" value="RNA_pol_Rpb1_4"/>
    <property type="match status" value="1"/>
</dbReference>
<dbReference type="Pfam" id="PF04998">
    <property type="entry name" value="RNA_pol_Rpb1_5"/>
    <property type="match status" value="1"/>
</dbReference>
<dbReference type="SMART" id="SM00663">
    <property type="entry name" value="RPOLA_N"/>
    <property type="match status" value="1"/>
</dbReference>
<dbReference type="SUPFAM" id="SSF64484">
    <property type="entry name" value="beta and beta-prime subunits of DNA dependent RNA-polymerase"/>
    <property type="match status" value="1"/>
</dbReference>
<proteinExistence type="evidence at protein level"/>
<gene>
    <name evidence="1" type="primary">rpoC</name>
    <name type="synonym">lpm</name>
    <name type="synonym">std</name>
    <name type="ordered locus">BSU01080</name>
</gene>
<organism>
    <name type="scientific">Bacillus subtilis (strain 168)</name>
    <dbReference type="NCBI Taxonomy" id="224308"/>
    <lineage>
        <taxon>Bacteria</taxon>
        <taxon>Bacillati</taxon>
        <taxon>Bacillota</taxon>
        <taxon>Bacilli</taxon>
        <taxon>Bacillales</taxon>
        <taxon>Bacillaceae</taxon>
        <taxon>Bacillus</taxon>
    </lineage>
</organism>
<comment type="function">
    <text evidence="1 2">DNA-dependent RNA polymerase catalyzes the transcription of DNA into RNA using the four ribonucleoside triphosphates as substrates.</text>
</comment>
<comment type="catalytic activity">
    <reaction evidence="1 2">
        <text>RNA(n) + a ribonucleoside 5'-triphosphate = RNA(n+1) + diphosphate</text>
        <dbReference type="Rhea" id="RHEA:21248"/>
        <dbReference type="Rhea" id="RHEA-COMP:14527"/>
        <dbReference type="Rhea" id="RHEA-COMP:17342"/>
        <dbReference type="ChEBI" id="CHEBI:33019"/>
        <dbReference type="ChEBI" id="CHEBI:61557"/>
        <dbReference type="ChEBI" id="CHEBI:140395"/>
        <dbReference type="EC" id="2.7.7.6"/>
    </reaction>
</comment>
<comment type="cofactor">
    <cofactor evidence="1">
        <name>Mg(2+)</name>
        <dbReference type="ChEBI" id="CHEBI:18420"/>
    </cofactor>
    <text evidence="1">Binds 1 Mg(2+) ion per subunit.</text>
</comment>
<comment type="cofactor">
    <cofactor evidence="1">
        <name>Zn(2+)</name>
        <dbReference type="ChEBI" id="CHEBI:29105"/>
    </cofactor>
    <text evidence="1">Binds 2 Zn(2+) ions per subunit.</text>
</comment>
<comment type="subunit">
    <text evidence="1 2 3 4">RNAP is composed of a core of 2 alpha, a beta and a beta' subunit. The core is associated with a delta subunit, and at least one of epsilon or omega (PubMed:18289874, PubMed:21710567, PubMed:6802805). When a sigma factor is associated with the core the holoenzyme is formed, which can initiate transcription (PubMed:18289874).</text>
</comment>
<comment type="interaction">
    <interactant intactId="EBI-5244361">
        <id>P37871</id>
    </interactant>
    <interactant intactId="EBI-15816929">
        <id>C0H3R4</id>
        <label>rsoA</label>
    </interactant>
    <organismsDiffer>false</organismsDiffer>
    <experiments>3</experiments>
</comment>
<comment type="interaction">
    <interactant intactId="EBI-5244361">
        <id>P37871</id>
    </interactant>
    <interactant intactId="EBI-5248631">
        <id>O31602</id>
        <label>spx</label>
    </interactant>
    <organismsDiffer>false</organismsDiffer>
    <experiments>2</experiments>
</comment>
<comment type="similarity">
    <text evidence="1">Belongs to the RNA polymerase beta' chain family.</text>
</comment>
<comment type="sequence caution" evidence="5">
    <conflict type="frameshift">
        <sequence resource="EMBL-CDS" id="AAB59112"/>
    </conflict>
</comment>
<protein>
    <recommendedName>
        <fullName evidence="1">DNA-directed RNA polymerase subunit beta'</fullName>
        <shortName evidence="1">RNAP subunit beta'</shortName>
        <ecNumber evidence="1 2">2.7.7.6</ecNumber>
    </recommendedName>
    <alternativeName>
        <fullName evidence="1">RNA polymerase subunit beta'</fullName>
    </alternativeName>
    <alternativeName>
        <fullName evidence="1">Transcriptase subunit beta'</fullName>
    </alternativeName>
</protein>
<name>RPOC_BACSU</name>
<accession>P37871</accession>
<accession>P70978</accession>
<evidence type="ECO:0000255" key="1">
    <source>
        <dbReference type="HAMAP-Rule" id="MF_01322"/>
    </source>
</evidence>
<evidence type="ECO:0000269" key="2">
    <source>
    </source>
</evidence>
<evidence type="ECO:0000269" key="3">
    <source>
    </source>
</evidence>
<evidence type="ECO:0000269" key="4">
    <source>
    </source>
</evidence>
<evidence type="ECO:0000305" key="5"/>
<evidence type="ECO:0007829" key="6">
    <source>
        <dbReference type="PDB" id="6WVJ"/>
    </source>
</evidence>
<evidence type="ECO:0007829" key="7">
    <source>
        <dbReference type="PDB" id="6WVK"/>
    </source>
</evidence>
<evidence type="ECO:0007829" key="8">
    <source>
        <dbReference type="PDB" id="8XA6"/>
    </source>
</evidence>
<evidence type="ECO:0007829" key="9">
    <source>
        <dbReference type="PDB" id="8XA7"/>
    </source>
</evidence>
<evidence type="ECO:0007829" key="10">
    <source>
        <dbReference type="PDB" id="8XA8"/>
    </source>
</evidence>
<reference key="1">
    <citation type="journal article" date="1995" name="J. Biol. Chem.">
        <title>Streptolydigin resistance can be conferred by alterations to either the beta or beta' subunits of Bacillus subtilis RNA polymerase.</title>
        <authorList>
            <person name="Yang X."/>
            <person name="Price C.W."/>
        </authorList>
    </citation>
    <scope>NUCLEOTIDE SEQUENCE [GENOMIC DNA]</scope>
    <scope>STREPTOLYDIGAN RESISTANCE</scope>
    <source>
        <strain>168 / Marburg / ATCC 6051 / DSM 10 / JCM 1465 / NBRC 13719 / NCIMB 3610 / NRRL NRS-744 / VKM B-501</strain>
    </source>
</reference>
<reference key="2">
    <citation type="journal article" date="1997" name="Nature">
        <title>The complete genome sequence of the Gram-positive bacterium Bacillus subtilis.</title>
        <authorList>
            <person name="Kunst F."/>
            <person name="Ogasawara N."/>
            <person name="Moszer I."/>
            <person name="Albertini A.M."/>
            <person name="Alloni G."/>
            <person name="Azevedo V."/>
            <person name="Bertero M.G."/>
            <person name="Bessieres P."/>
            <person name="Bolotin A."/>
            <person name="Borchert S."/>
            <person name="Borriss R."/>
            <person name="Boursier L."/>
            <person name="Brans A."/>
            <person name="Braun M."/>
            <person name="Brignell S.C."/>
            <person name="Bron S."/>
            <person name="Brouillet S."/>
            <person name="Bruschi C.V."/>
            <person name="Caldwell B."/>
            <person name="Capuano V."/>
            <person name="Carter N.M."/>
            <person name="Choi S.-K."/>
            <person name="Codani J.-J."/>
            <person name="Connerton I.F."/>
            <person name="Cummings N.J."/>
            <person name="Daniel R.A."/>
            <person name="Denizot F."/>
            <person name="Devine K.M."/>
            <person name="Duesterhoeft A."/>
            <person name="Ehrlich S.D."/>
            <person name="Emmerson P.T."/>
            <person name="Entian K.-D."/>
            <person name="Errington J."/>
            <person name="Fabret C."/>
            <person name="Ferrari E."/>
            <person name="Foulger D."/>
            <person name="Fritz C."/>
            <person name="Fujita M."/>
            <person name="Fujita Y."/>
            <person name="Fuma S."/>
            <person name="Galizzi A."/>
            <person name="Galleron N."/>
            <person name="Ghim S.-Y."/>
            <person name="Glaser P."/>
            <person name="Goffeau A."/>
            <person name="Golightly E.J."/>
            <person name="Grandi G."/>
            <person name="Guiseppi G."/>
            <person name="Guy B.J."/>
            <person name="Haga K."/>
            <person name="Haiech J."/>
            <person name="Harwood C.R."/>
            <person name="Henaut A."/>
            <person name="Hilbert H."/>
            <person name="Holsappel S."/>
            <person name="Hosono S."/>
            <person name="Hullo M.-F."/>
            <person name="Itaya M."/>
            <person name="Jones L.-M."/>
            <person name="Joris B."/>
            <person name="Karamata D."/>
            <person name="Kasahara Y."/>
            <person name="Klaerr-Blanchard M."/>
            <person name="Klein C."/>
            <person name="Kobayashi Y."/>
            <person name="Koetter P."/>
            <person name="Koningstein G."/>
            <person name="Krogh S."/>
            <person name="Kumano M."/>
            <person name="Kurita K."/>
            <person name="Lapidus A."/>
            <person name="Lardinois S."/>
            <person name="Lauber J."/>
            <person name="Lazarevic V."/>
            <person name="Lee S.-M."/>
            <person name="Levine A."/>
            <person name="Liu H."/>
            <person name="Masuda S."/>
            <person name="Mauel C."/>
            <person name="Medigue C."/>
            <person name="Medina N."/>
            <person name="Mellado R.P."/>
            <person name="Mizuno M."/>
            <person name="Moestl D."/>
            <person name="Nakai S."/>
            <person name="Noback M."/>
            <person name="Noone D."/>
            <person name="O'Reilly M."/>
            <person name="Ogawa K."/>
            <person name="Ogiwara A."/>
            <person name="Oudega B."/>
            <person name="Park S.-H."/>
            <person name="Parro V."/>
            <person name="Pohl T.M."/>
            <person name="Portetelle D."/>
            <person name="Porwollik S."/>
            <person name="Prescott A.M."/>
            <person name="Presecan E."/>
            <person name="Pujic P."/>
            <person name="Purnelle B."/>
            <person name="Rapoport G."/>
            <person name="Rey M."/>
            <person name="Reynolds S."/>
            <person name="Rieger M."/>
            <person name="Rivolta C."/>
            <person name="Rocha E."/>
            <person name="Roche B."/>
            <person name="Rose M."/>
            <person name="Sadaie Y."/>
            <person name="Sato T."/>
            <person name="Scanlan E."/>
            <person name="Schleich S."/>
            <person name="Schroeter R."/>
            <person name="Scoffone F."/>
            <person name="Sekiguchi J."/>
            <person name="Sekowska A."/>
            <person name="Seror S.J."/>
            <person name="Serror P."/>
            <person name="Shin B.-S."/>
            <person name="Soldo B."/>
            <person name="Sorokin A."/>
            <person name="Tacconi E."/>
            <person name="Takagi T."/>
            <person name="Takahashi H."/>
            <person name="Takemaru K."/>
            <person name="Takeuchi M."/>
            <person name="Tamakoshi A."/>
            <person name="Tanaka T."/>
            <person name="Terpstra P."/>
            <person name="Tognoni A."/>
            <person name="Tosato V."/>
            <person name="Uchiyama S."/>
            <person name="Vandenbol M."/>
            <person name="Vannier F."/>
            <person name="Vassarotti A."/>
            <person name="Viari A."/>
            <person name="Wambutt R."/>
            <person name="Wedler E."/>
            <person name="Wedler H."/>
            <person name="Weitzenegger T."/>
            <person name="Winters P."/>
            <person name="Wipat A."/>
            <person name="Yamamoto H."/>
            <person name="Yamane K."/>
            <person name="Yasumoto K."/>
            <person name="Yata K."/>
            <person name="Yoshida K."/>
            <person name="Yoshikawa H.-F."/>
            <person name="Zumstein E."/>
            <person name="Yoshikawa H."/>
            <person name="Danchin A."/>
        </authorList>
    </citation>
    <scope>NUCLEOTIDE SEQUENCE [LARGE SCALE GENOMIC DNA]</scope>
    <source>
        <strain>168</strain>
    </source>
</reference>
<reference key="3">
    <citation type="journal article" date="2009" name="Microbiology">
        <title>From a consortium sequence to a unified sequence: the Bacillus subtilis 168 reference genome a decade later.</title>
        <authorList>
            <person name="Barbe V."/>
            <person name="Cruveiller S."/>
            <person name="Kunst F."/>
            <person name="Lenoble P."/>
            <person name="Meurice G."/>
            <person name="Sekowska A."/>
            <person name="Vallenet D."/>
            <person name="Wang T."/>
            <person name="Moszer I."/>
            <person name="Medigue C."/>
            <person name="Danchin A."/>
        </authorList>
    </citation>
    <scope>SEQUENCE REVISION TO 1026; 1173 AND 1176</scope>
</reference>
<reference key="4">
    <citation type="journal article" date="1995" name="J. Biol. Chem.">
        <title>Genetic and transcriptional organization of the region encoding the beta subunit of Bacillus subtilis RNA polymerase.</title>
        <authorList>
            <person name="Boor K.J."/>
            <person name="Duncan M.L."/>
            <person name="Price C.W."/>
        </authorList>
    </citation>
    <scope>NUCLEOTIDE SEQUENCE [GENOMIC DNA] OF 1-466</scope>
    <source>
        <strain>168 / Marburg / ATCC 6051 / DSM 10 / JCM 1465 / NBRC 13719 / NCIMB 3610 / NRRL NRS-744 / VKM B-501</strain>
    </source>
</reference>
<reference key="5">
    <citation type="journal article" date="1996" name="Microbiology">
        <title>Sequence analysis of a 50 kb region between spo0H and rrnH on the Bacillus subtilis chromosome.</title>
        <authorList>
            <person name="Yasumoto K."/>
            <person name="Liu H."/>
            <person name="Jeong S.M."/>
            <person name="Ohashi Y."/>
            <person name="Kakinuma S."/>
            <person name="Tanaka K."/>
            <person name="Kawamura F."/>
            <person name="Yoshikawa H."/>
            <person name="Takahashi H."/>
        </authorList>
    </citation>
    <scope>NUCLEOTIDE SEQUENCE [GENOMIC DNA] OF 453-1199</scope>
    <source>
        <strain>168</strain>
    </source>
</reference>
<reference key="6">
    <citation type="journal article" date="1982" name="J. Bacteriol.">
        <title>Interchangeability of delta subunits of RNA polymerase from different species of the genus Bacillus.</title>
        <authorList>
            <person name="Achberger E.C."/>
            <person name="Tahara M."/>
            <person name="Whiteley H.R."/>
        </authorList>
    </citation>
    <scope>SUBUNIT</scope>
    <source>
        <strain>168</strain>
    </source>
</reference>
<reference key="7">
    <citation type="journal article" date="2008" name="Protein Expr. Purif.">
        <title>Overproduction and purification of recombinant Bacillus subtilis RNA polymerase.</title>
        <authorList>
            <person name="Yang X."/>
            <person name="Lewis P.J."/>
        </authorList>
    </citation>
    <scope>FUNCTION</scope>
    <scope>SUBUNIT</scope>
    <source>
        <strain>BS200</strain>
    </source>
</reference>
<reference key="8">
    <citation type="journal article" date="2011" name="Proteomics">
        <title>The dynamic protein partnership of RNA polymerase in Bacillus subtilis.</title>
        <authorList>
            <person name="Delumeau O."/>
            <person name="Lecointe F."/>
            <person name="Muntel J."/>
            <person name="Guillot A."/>
            <person name="Guedon E."/>
            <person name="Monnet V."/>
            <person name="Hecker M."/>
            <person name="Becher D."/>
            <person name="Polard P."/>
            <person name="Noirot P."/>
        </authorList>
    </citation>
    <scope>SUBUNIT</scope>
    <source>
        <strain>168</strain>
    </source>
</reference>
<sequence length="1199" mass="134252">MLDVNNFEYMNIGLASPDKIRSWSFGEVKKPETINYRTLKPEKDGLFCERIFGPTKDWECHCGKYKRVRYKGVVCDRCGVEVTRAKVRRERMGHIELAAPVSHIWYFKGIPSRMGLVLDMSPRALEEVIYFASYVVTDPANTPLEKKQLLSEKEYRAYLDKYGNKFQASMGAEAIHKLLQDIDLVKEVDMLKEELKTSQGQRRTRAIKRLEVLEAFRNSGNKPSWMILDVLPVIPPELRPMVQLDGGRFATSDLNDLYRRVINRNNRLKRLLDLGAPSIIVQNEKRMLQEAVDALIDNGRRGRPVTGPGNRPLKSLSHMLKGKQGRFRQNLLGKRVDYSGRSVIVVGPHLKMYQCGLPKEMALELFKPFVMKELVEKGLAHNIKSAKRKIERVQPEVWDVLESVIKEHPVLLNRAPTLHRLGIQAFEPTLVEGRAIRLHPLVCTAYNADFDGDQMAVHVPLSAEAQAEARILMLAAQNILNPKDGKPVVTPSQDMVLGNYYLTLERAGAVGEGMVFKNTDEALLAYQNGYVHLHTRVAVAANSLKNVTFTEEQRSKLLITTVGKLVFNEILPESFPYMNEPTKSNIEEKTPDRFFLEKGADVKAVIAQQPINAPFKKGILGKIIAEIFKRFHITETSKMLDRMKNLGFKYSTKAGITVGVSDIVVLDDKQEILEEAQSKVDNVMKQFRRGLITEEERYERVISIWSAAKDVIQGKLMKSLDELNPIYMMSDSGARGNASNFTQLAGMRGLMANPAGRIIELPIKSSFREGLTVLEYFISTHGARKGLADTALKTADSGYLTRRLVDVAQDVIIRETDCGTDRGILAKPLKEGTETIERLEERLIGRFARKQVKHPETGEVLVNENELIDEDKALEIVEAGIEEVWIRSAFTCNTPHGVCKRCYGRNLATGSDVEVGEAVGIIAAQSIGEPGTQLTMRTFHTGGVAGDDITQGLPRIQELFEARNPKGQATITEIDGTVVEINEVRDKQQEIVVQGAVETRSYTAPYNSRLKVAEGDKITRGQVLTEGSIDPKELLKVTDLTTVQEYLLHEVQKVYRMQGVEIGDKHVEVMVRQMLRKVRVIDAGDTDVLPGTLLDIHQFTEANKKVLLEGNRPATGRPVLLGITKASLETDSFLSAASFQETTRVLTDAAIKGKRDELLGLKENVIIGKLVPAGTGMMKYRKVKPVSNVQPTDDMVPVE</sequence>